<accession>Q8EVI1</accession>
<name>PURA_MALP2</name>
<proteinExistence type="inferred from homology"/>
<dbReference type="EC" id="6.3.4.4" evidence="1"/>
<dbReference type="EMBL" id="BA000026">
    <property type="protein sequence ID" value="BAC44373.1"/>
    <property type="status" value="ALT_INIT"/>
    <property type="molecule type" value="Genomic_DNA"/>
</dbReference>
<dbReference type="RefSeq" id="WP_044891272.1">
    <property type="nucleotide sequence ID" value="NC_004432.1"/>
</dbReference>
<dbReference type="SMR" id="Q8EVI1"/>
<dbReference type="FunCoup" id="Q8EVI1">
    <property type="interactions" value="247"/>
</dbReference>
<dbReference type="STRING" id="272633.gene:10731700"/>
<dbReference type="KEGG" id="mpe:MYPE5830"/>
<dbReference type="eggNOG" id="COG0104">
    <property type="taxonomic scope" value="Bacteria"/>
</dbReference>
<dbReference type="HOGENOM" id="CLU_029848_0_0_14"/>
<dbReference type="InParanoid" id="Q8EVI1"/>
<dbReference type="UniPathway" id="UPA00075">
    <property type="reaction ID" value="UER00335"/>
</dbReference>
<dbReference type="Proteomes" id="UP000002522">
    <property type="component" value="Chromosome"/>
</dbReference>
<dbReference type="GO" id="GO:0005737">
    <property type="term" value="C:cytoplasm"/>
    <property type="evidence" value="ECO:0007669"/>
    <property type="project" value="UniProtKB-SubCell"/>
</dbReference>
<dbReference type="GO" id="GO:0004019">
    <property type="term" value="F:adenylosuccinate synthase activity"/>
    <property type="evidence" value="ECO:0007669"/>
    <property type="project" value="UniProtKB-UniRule"/>
</dbReference>
<dbReference type="GO" id="GO:0005525">
    <property type="term" value="F:GTP binding"/>
    <property type="evidence" value="ECO:0007669"/>
    <property type="project" value="UniProtKB-UniRule"/>
</dbReference>
<dbReference type="GO" id="GO:0000287">
    <property type="term" value="F:magnesium ion binding"/>
    <property type="evidence" value="ECO:0007669"/>
    <property type="project" value="UniProtKB-UniRule"/>
</dbReference>
<dbReference type="GO" id="GO:0044208">
    <property type="term" value="P:'de novo' AMP biosynthetic process"/>
    <property type="evidence" value="ECO:0007669"/>
    <property type="project" value="UniProtKB-UniRule"/>
</dbReference>
<dbReference type="GO" id="GO:0046040">
    <property type="term" value="P:IMP metabolic process"/>
    <property type="evidence" value="ECO:0007669"/>
    <property type="project" value="TreeGrafter"/>
</dbReference>
<dbReference type="CDD" id="cd03108">
    <property type="entry name" value="AdSS"/>
    <property type="match status" value="1"/>
</dbReference>
<dbReference type="FunFam" id="1.10.300.10:FF:000001">
    <property type="entry name" value="Adenylosuccinate synthetase"/>
    <property type="match status" value="1"/>
</dbReference>
<dbReference type="FunFam" id="3.90.170.10:FF:000001">
    <property type="entry name" value="Adenylosuccinate synthetase"/>
    <property type="match status" value="1"/>
</dbReference>
<dbReference type="Gene3D" id="3.40.440.10">
    <property type="entry name" value="Adenylosuccinate Synthetase, subunit A, domain 1"/>
    <property type="match status" value="1"/>
</dbReference>
<dbReference type="Gene3D" id="1.10.300.10">
    <property type="entry name" value="Adenylosuccinate Synthetase, subunit A, domain 2"/>
    <property type="match status" value="1"/>
</dbReference>
<dbReference type="Gene3D" id="3.90.170.10">
    <property type="entry name" value="Adenylosuccinate Synthetase, subunit A, domain 3"/>
    <property type="match status" value="1"/>
</dbReference>
<dbReference type="HAMAP" id="MF_00011">
    <property type="entry name" value="Adenylosucc_synth"/>
    <property type="match status" value="1"/>
</dbReference>
<dbReference type="InterPro" id="IPR018220">
    <property type="entry name" value="Adenylosuccin_syn_GTP-bd"/>
</dbReference>
<dbReference type="InterPro" id="IPR033128">
    <property type="entry name" value="Adenylosuccin_syn_Lys_AS"/>
</dbReference>
<dbReference type="InterPro" id="IPR042109">
    <property type="entry name" value="Adenylosuccinate_synth_dom1"/>
</dbReference>
<dbReference type="InterPro" id="IPR042110">
    <property type="entry name" value="Adenylosuccinate_synth_dom2"/>
</dbReference>
<dbReference type="InterPro" id="IPR042111">
    <property type="entry name" value="Adenylosuccinate_synth_dom3"/>
</dbReference>
<dbReference type="InterPro" id="IPR001114">
    <property type="entry name" value="Adenylosuccinate_synthetase"/>
</dbReference>
<dbReference type="InterPro" id="IPR027417">
    <property type="entry name" value="P-loop_NTPase"/>
</dbReference>
<dbReference type="NCBIfam" id="NF002223">
    <property type="entry name" value="PRK01117.1"/>
    <property type="match status" value="1"/>
</dbReference>
<dbReference type="NCBIfam" id="TIGR00184">
    <property type="entry name" value="purA"/>
    <property type="match status" value="1"/>
</dbReference>
<dbReference type="PANTHER" id="PTHR11846">
    <property type="entry name" value="ADENYLOSUCCINATE SYNTHETASE"/>
    <property type="match status" value="1"/>
</dbReference>
<dbReference type="PANTHER" id="PTHR11846:SF0">
    <property type="entry name" value="ADENYLOSUCCINATE SYNTHETASE"/>
    <property type="match status" value="1"/>
</dbReference>
<dbReference type="Pfam" id="PF00709">
    <property type="entry name" value="Adenylsucc_synt"/>
    <property type="match status" value="1"/>
</dbReference>
<dbReference type="SMART" id="SM00788">
    <property type="entry name" value="Adenylsucc_synt"/>
    <property type="match status" value="1"/>
</dbReference>
<dbReference type="SUPFAM" id="SSF52540">
    <property type="entry name" value="P-loop containing nucleoside triphosphate hydrolases"/>
    <property type="match status" value="1"/>
</dbReference>
<dbReference type="PROSITE" id="PS01266">
    <property type="entry name" value="ADENYLOSUCCIN_SYN_1"/>
    <property type="match status" value="1"/>
</dbReference>
<dbReference type="PROSITE" id="PS00513">
    <property type="entry name" value="ADENYLOSUCCIN_SYN_2"/>
    <property type="match status" value="1"/>
</dbReference>
<keyword id="KW-0963">Cytoplasm</keyword>
<keyword id="KW-0342">GTP-binding</keyword>
<keyword id="KW-0436">Ligase</keyword>
<keyword id="KW-0460">Magnesium</keyword>
<keyword id="KW-0479">Metal-binding</keyword>
<keyword id="KW-0547">Nucleotide-binding</keyword>
<keyword id="KW-0658">Purine biosynthesis</keyword>
<keyword id="KW-1185">Reference proteome</keyword>
<protein>
    <recommendedName>
        <fullName evidence="1">Adenylosuccinate synthetase</fullName>
        <shortName evidence="1">AMPSase</shortName>
        <shortName evidence="1">AdSS</shortName>
        <ecNumber evidence="1">6.3.4.4</ecNumber>
    </recommendedName>
    <alternativeName>
        <fullName evidence="1">IMP--aspartate ligase</fullName>
    </alternativeName>
</protein>
<organism>
    <name type="scientific">Malacoplasma penetrans (strain HF-2)</name>
    <name type="common">Mycoplasma penetrans</name>
    <dbReference type="NCBI Taxonomy" id="272633"/>
    <lineage>
        <taxon>Bacteria</taxon>
        <taxon>Bacillati</taxon>
        <taxon>Mycoplasmatota</taxon>
        <taxon>Mycoplasmoidales</taxon>
        <taxon>Mycoplasmoidaceae</taxon>
        <taxon>Malacoplasma</taxon>
    </lineage>
</organism>
<sequence>MNENLLMIIGSQFGDEGKGKFVDLLSNQFDYIVRYQGGDNAGHTIVFDNKTFKLRLIPSGIFNPRNRVVIANGVVLNPITLLEEVKYLKSNGVSTDNLYVSDKCHVIFNFHIEMDKMLEELKGSKKIGTTNKGIGPCYTDKVSRVGIRVCDLFDFNVLLAKIQDNLQIKNVLFSRYGKQIFNPYTIAKQYYELGQQIKPFVINTVALLNYAYERNNKILFEGAQGIMLDIDYGTYPYVTSSNVIGLVSSGTGLAINKIKRILGVVKAYSTRVGSGPFVSEIEEENLAHYIREKGHEYGTVTKRPRRIGWLDLFLLKYVVTVSGISEIAITLIDVLSKVQKIKVCIGYKRNDKQLNYMPSSIEELQKCEPIYEILDGWSEDVSRIKSYDDLPLNLKRYISYIENFLKVRVRFVSVGPDRNQTIIKDN</sequence>
<evidence type="ECO:0000255" key="1">
    <source>
        <dbReference type="HAMAP-Rule" id="MF_00011"/>
    </source>
</evidence>
<evidence type="ECO:0000305" key="2"/>
<comment type="function">
    <text evidence="1">Plays an important role in the de novo pathway of purine nucleotide biosynthesis. Catalyzes the first committed step in the biosynthesis of AMP from IMP.</text>
</comment>
<comment type="catalytic activity">
    <reaction evidence="1">
        <text>IMP + L-aspartate + GTP = N(6)-(1,2-dicarboxyethyl)-AMP + GDP + phosphate + 2 H(+)</text>
        <dbReference type="Rhea" id="RHEA:15753"/>
        <dbReference type="ChEBI" id="CHEBI:15378"/>
        <dbReference type="ChEBI" id="CHEBI:29991"/>
        <dbReference type="ChEBI" id="CHEBI:37565"/>
        <dbReference type="ChEBI" id="CHEBI:43474"/>
        <dbReference type="ChEBI" id="CHEBI:57567"/>
        <dbReference type="ChEBI" id="CHEBI:58053"/>
        <dbReference type="ChEBI" id="CHEBI:58189"/>
        <dbReference type="EC" id="6.3.4.4"/>
    </reaction>
</comment>
<comment type="cofactor">
    <cofactor evidence="1">
        <name>Mg(2+)</name>
        <dbReference type="ChEBI" id="CHEBI:18420"/>
    </cofactor>
    <text evidence="1">Binds 1 Mg(2+) ion per subunit.</text>
</comment>
<comment type="pathway">
    <text evidence="1">Purine metabolism; AMP biosynthesis via de novo pathway; AMP from IMP: step 1/2.</text>
</comment>
<comment type="subunit">
    <text evidence="1">Homodimer.</text>
</comment>
<comment type="subcellular location">
    <subcellularLocation>
        <location evidence="1">Cytoplasm</location>
    </subcellularLocation>
</comment>
<comment type="similarity">
    <text evidence="1">Belongs to the adenylosuccinate synthetase family.</text>
</comment>
<comment type="sequence caution" evidence="2">
    <conflict type="erroneous initiation">
        <sequence resource="EMBL-CDS" id="BAC44373"/>
    </conflict>
</comment>
<feature type="chain" id="PRO_0000095201" description="Adenylosuccinate synthetase">
    <location>
        <begin position="1"/>
        <end position="426"/>
    </location>
</feature>
<feature type="active site" description="Proton acceptor" evidence="1">
    <location>
        <position position="15"/>
    </location>
</feature>
<feature type="active site" description="Proton donor" evidence="1">
    <location>
        <position position="43"/>
    </location>
</feature>
<feature type="binding site" evidence="1">
    <location>
        <begin position="14"/>
        <end position="20"/>
    </location>
    <ligand>
        <name>GTP</name>
        <dbReference type="ChEBI" id="CHEBI:37565"/>
    </ligand>
</feature>
<feature type="binding site" description="in other chain" evidence="1">
    <location>
        <begin position="15"/>
        <end position="18"/>
    </location>
    <ligand>
        <name>IMP</name>
        <dbReference type="ChEBI" id="CHEBI:58053"/>
        <note>ligand shared between dimeric partners</note>
    </ligand>
</feature>
<feature type="binding site" evidence="1">
    <location>
        <position position="15"/>
    </location>
    <ligand>
        <name>Mg(2+)</name>
        <dbReference type="ChEBI" id="CHEBI:18420"/>
    </ligand>
</feature>
<feature type="binding site" description="in other chain" evidence="1">
    <location>
        <begin position="40"/>
        <end position="43"/>
    </location>
    <ligand>
        <name>IMP</name>
        <dbReference type="ChEBI" id="CHEBI:58053"/>
        <note>ligand shared between dimeric partners</note>
    </ligand>
</feature>
<feature type="binding site" evidence="1">
    <location>
        <begin position="42"/>
        <end position="44"/>
    </location>
    <ligand>
        <name>GTP</name>
        <dbReference type="ChEBI" id="CHEBI:37565"/>
    </ligand>
</feature>
<feature type="binding site" evidence="1">
    <location>
        <position position="42"/>
    </location>
    <ligand>
        <name>Mg(2+)</name>
        <dbReference type="ChEBI" id="CHEBI:18420"/>
    </ligand>
</feature>
<feature type="binding site" description="in other chain" evidence="1">
    <location>
        <position position="130"/>
    </location>
    <ligand>
        <name>IMP</name>
        <dbReference type="ChEBI" id="CHEBI:58053"/>
        <note>ligand shared between dimeric partners</note>
    </ligand>
</feature>
<feature type="binding site" evidence="1">
    <location>
        <position position="144"/>
    </location>
    <ligand>
        <name>IMP</name>
        <dbReference type="ChEBI" id="CHEBI:58053"/>
        <note>ligand shared between dimeric partners</note>
    </ligand>
</feature>
<feature type="binding site" description="in other chain" evidence="1">
    <location>
        <position position="224"/>
    </location>
    <ligand>
        <name>IMP</name>
        <dbReference type="ChEBI" id="CHEBI:58053"/>
        <note>ligand shared between dimeric partners</note>
    </ligand>
</feature>
<feature type="binding site" description="in other chain" evidence="1">
    <location>
        <position position="239"/>
    </location>
    <ligand>
        <name>IMP</name>
        <dbReference type="ChEBI" id="CHEBI:58053"/>
        <note>ligand shared between dimeric partners</note>
    </ligand>
</feature>
<feature type="binding site" evidence="1">
    <location>
        <begin position="299"/>
        <end position="305"/>
    </location>
    <ligand>
        <name>substrate</name>
    </ligand>
</feature>
<feature type="binding site" description="in other chain" evidence="1">
    <location>
        <position position="303"/>
    </location>
    <ligand>
        <name>IMP</name>
        <dbReference type="ChEBI" id="CHEBI:58053"/>
        <note>ligand shared between dimeric partners</note>
    </ligand>
</feature>
<feature type="binding site" evidence="1">
    <location>
        <position position="305"/>
    </location>
    <ligand>
        <name>GTP</name>
        <dbReference type="ChEBI" id="CHEBI:37565"/>
    </ligand>
</feature>
<feature type="binding site" evidence="1">
    <location>
        <begin position="331"/>
        <end position="333"/>
    </location>
    <ligand>
        <name>GTP</name>
        <dbReference type="ChEBI" id="CHEBI:37565"/>
    </ligand>
</feature>
<feature type="binding site" evidence="1">
    <location>
        <begin position="413"/>
        <end position="415"/>
    </location>
    <ligand>
        <name>GTP</name>
        <dbReference type="ChEBI" id="CHEBI:37565"/>
    </ligand>
</feature>
<gene>
    <name evidence="1" type="primary">purA</name>
    <name type="ordered locus">MYPE5830</name>
</gene>
<reference key="1">
    <citation type="journal article" date="2002" name="Nucleic Acids Res.">
        <title>The complete genomic sequence of Mycoplasma penetrans, an intracellular bacterial pathogen in humans.</title>
        <authorList>
            <person name="Sasaki Y."/>
            <person name="Ishikawa J."/>
            <person name="Yamashita A."/>
            <person name="Oshima K."/>
            <person name="Kenri T."/>
            <person name="Furuya K."/>
            <person name="Yoshino C."/>
            <person name="Horino A."/>
            <person name="Shiba T."/>
            <person name="Sasaki T."/>
            <person name="Hattori M."/>
        </authorList>
    </citation>
    <scope>NUCLEOTIDE SEQUENCE [LARGE SCALE GENOMIC DNA]</scope>
    <source>
        <strain>HF-2</strain>
    </source>
</reference>